<reference key="1">
    <citation type="journal article" date="1990" name="J. Biol. Chem.">
        <title>Murine complement C2 and factor B genomic and cDNA cloning reveals different mechanisms for multiple transcripts of C2 and B.</title>
        <authorList>
            <person name="Ishikawa N."/>
            <person name="Nonaka M."/>
            <person name="Wetsel R.A."/>
            <person name="Colten H.R."/>
        </authorList>
    </citation>
    <scope>NUCLEOTIDE SEQUENCE [GENOMIC DNA]</scope>
</reference>
<reference key="2">
    <citation type="journal article" date="2003" name="Genome Res.">
        <title>Analysis of the gene-dense major histocompatibility complex class III region and its comparison to mouse.</title>
        <authorList>
            <person name="Xie T."/>
            <person name="Rowen L."/>
            <person name="Aguado B."/>
            <person name="Ahearn M.E."/>
            <person name="Madan A."/>
            <person name="Qin S."/>
            <person name="Campbell R.D."/>
            <person name="Hood L."/>
        </authorList>
    </citation>
    <scope>NUCLEOTIDE SEQUENCE [LARGE SCALE GENOMIC DNA]</scope>
    <source>
        <strain>129</strain>
    </source>
</reference>
<reference key="3">
    <citation type="journal article" date="2004" name="Genome Res.">
        <title>The status, quality, and expansion of the NIH full-length cDNA project: the Mammalian Gene Collection (MGC).</title>
        <authorList>
            <consortium name="The MGC Project Team"/>
        </authorList>
    </citation>
    <scope>NUCLEOTIDE SEQUENCE [LARGE SCALE MRNA]</scope>
    <source>
        <strain>Czech II</strain>
        <tissue>Mammary gland</tissue>
    </source>
</reference>
<reference key="4">
    <citation type="journal article" date="1983" name="J. Biol. Chem.">
        <title>Phylogenetic conservation of a class III major histocompatibility complex antigen, factor B. Isolation and nucleotide sequencing of mouse factor B cDNA clones.</title>
        <authorList>
            <person name="Sackstein R."/>
            <person name="Colten H.R."/>
            <person name="Woods D.E."/>
        </authorList>
    </citation>
    <scope>NUCLEOTIDE SEQUENCE [MRNA] OF 285-761</scope>
</reference>
<reference key="5">
    <citation type="journal article" date="2006" name="J. Proteome Res.">
        <title>Proteome-wide characterization of N-glycosylation events by diagonal chromatography.</title>
        <authorList>
            <person name="Ghesquiere B."/>
            <person name="Van Damme J."/>
            <person name="Martens L."/>
            <person name="Vandekerckhove J."/>
            <person name="Gevaert K."/>
        </authorList>
    </citation>
    <scope>GLYCOSYLATION [LARGE SCALE ANALYSIS] AT ASN-282</scope>
    <source>
        <strain>C57BL/6J</strain>
        <tissue>Plasma</tissue>
    </source>
</reference>
<reference key="6">
    <citation type="journal article" date="2007" name="J. Proteome Res.">
        <title>Enhanced analysis of the mouse plasma proteome using cysteine-containing tryptic glycopeptides.</title>
        <authorList>
            <person name="Bernhard O.K."/>
            <person name="Kapp E.A."/>
            <person name="Simpson R.J."/>
        </authorList>
    </citation>
    <scope>GLYCOSYLATION [LARGE SCALE ANALYSIS] AT ASN-119</scope>
    <source>
        <strain>C57BL/6J</strain>
        <tissue>Plasma</tissue>
    </source>
</reference>
<comment type="function">
    <text evidence="1">Precursor of the catalytic component of the C3 and C5 convertase complexes of the alternative pathway of the complement system, a cascade of proteins that leads to phagocytosis and breakdown of pathogens and signaling that strengthens the adaptive immune system. The alternative complement pathway acts as an amplification loop that enhances other complement pathways (classical, lectin and GZMK) by promoting formation of additional C3 and C5 convertases. CFB is cleaved and activated by CFD to generate Ba and Bb chains; Bb chain constituting the catalytic component of the C3 and C5 convertases.</text>
</comment>
<comment type="function">
    <molecule>Complement factor B Bb</molecule>
    <text evidence="1">Serine protease component of the complement C3 and C5 convertase complexes of the alternative complement pathway. Following cleavage and activation by factor D (CFD), forms the C3 convertase together with complement C3b. As part of the C3 convertase, cleaves and activates C3 into C3a anaphylatoxin and C3b opsonin, the next components of the complement pathways. When an additional complement C3b molecule binds to the C3 convertase, forms the C5 convertase, which cleaves and activates C5 into C5a anaphylatoxin and C5b component of the membrane attack complex.</text>
</comment>
<comment type="function">
    <molecule>Complement factor B Ba</molecule>
    <text evidence="1">Involved in proliferation and differentiation of preactivated B-lymphocytes, rapid spreading of peripheral blood monocytes, stimulation of lymphocyte blastogenesis and lysis of erythrocytes.</text>
</comment>
<comment type="catalytic activity">
    <molecule>Complement factor B Bb</molecule>
    <reaction evidence="1">
        <text>Cleavage of Arg-|-Ser bond in complement component C3 alpha-chain to yield C3a and C3b, and Arg-|-Xaa bond in complement component C5 alpha-chain to yield C5a and C5b.</text>
        <dbReference type="EC" id="3.4.21.47"/>
    </reaction>
</comment>
<comment type="cofactor">
    <molecule>Complement factor B Bb</molecule>
    <cofactor evidence="1">
        <name>Mg(2+)</name>
        <dbReference type="ChEBI" id="CHEBI:18420"/>
    </cofactor>
    <cofactor evidence="1">
        <name>Mn(2+)</name>
        <dbReference type="ChEBI" id="CHEBI:29035"/>
    </cofactor>
</comment>
<comment type="subunit">
    <text evidence="1">Monomer. Interacts with complement C3b; this interaction is dependent on the presence of Mg(2+).</text>
</comment>
<comment type="subunit">
    <molecule>Complement factor B Bb</molecule>
    <text evidence="1">Catalytic component of the C3 convertase of the alternative complement pathway, also named C3bBb, composed of complement factor B Bb and complement C3b. Catalytic component of the C5 convertase of the alternative complement pathway, also named C3bBb3b, composed of complement factor B Bb and additional molecules of complement C3b. Interacts to CFP; this interaction contributes to the stabilization of the active C3-convertase enzyme complex.</text>
</comment>
<comment type="subcellular location">
    <subcellularLocation>
        <location evidence="1">Secreted</location>
    </subcellularLocation>
</comment>
<comment type="subcellular location">
    <molecule>Complement factor B Bb</molecule>
    <subcellularLocation>
        <location evidence="1">Cell surface</location>
    </subcellularLocation>
    <text evidence="1">Recruited to the surface of pathogens by complement C3b opsonin.</text>
</comment>
<comment type="domain">
    <text evidence="1">The unliganded VWA domain has an inactive 'locked' conformation whereby the scissile Arg-256|Lys-257 bond is protected from proteolytic activation.</text>
</comment>
<comment type="PTM">
    <text evidence="1">Cleaved by CFD following activation of the alternative complement system, generating Ba and Bb chains. Cleavage and activation takes place when CFB is already associated with complement C3b.</text>
</comment>
<comment type="similarity">
    <text evidence="4">Belongs to the peptidase S1 family.</text>
</comment>
<evidence type="ECO:0000250" key="1">
    <source>
        <dbReference type="UniProtKB" id="P00751"/>
    </source>
</evidence>
<evidence type="ECO:0000255" key="2"/>
<evidence type="ECO:0000255" key="3">
    <source>
        <dbReference type="PROSITE-ProRule" id="PRU00219"/>
    </source>
</evidence>
<evidence type="ECO:0000255" key="4">
    <source>
        <dbReference type="PROSITE-ProRule" id="PRU00274"/>
    </source>
</evidence>
<evidence type="ECO:0000255" key="5">
    <source>
        <dbReference type="PROSITE-ProRule" id="PRU00302"/>
    </source>
</evidence>
<evidence type="ECO:0000269" key="6">
    <source>
    </source>
</evidence>
<evidence type="ECO:0000269" key="7">
    <source>
    </source>
</evidence>
<evidence type="ECO:0000305" key="8"/>
<protein>
    <recommendedName>
        <fullName>Complement factor B</fullName>
        <ecNumber evidence="1">3.4.21.47</ecNumber>
    </recommendedName>
    <alternativeName>
        <fullName>C3/C5 convertase</fullName>
    </alternativeName>
    <component>
        <recommendedName>
            <fullName>Complement factor B Ba</fullName>
        </recommendedName>
    </component>
    <component>
        <recommendedName>
            <fullName>Complement factor B Bb</fullName>
        </recommendedName>
    </component>
</protein>
<organism>
    <name type="scientific">Mus musculus</name>
    <name type="common">Mouse</name>
    <dbReference type="NCBI Taxonomy" id="10090"/>
    <lineage>
        <taxon>Eukaryota</taxon>
        <taxon>Metazoa</taxon>
        <taxon>Chordata</taxon>
        <taxon>Craniata</taxon>
        <taxon>Vertebrata</taxon>
        <taxon>Euteleostomi</taxon>
        <taxon>Mammalia</taxon>
        <taxon>Eutheria</taxon>
        <taxon>Euarchontoglires</taxon>
        <taxon>Glires</taxon>
        <taxon>Rodentia</taxon>
        <taxon>Myomorpha</taxon>
        <taxon>Muroidea</taxon>
        <taxon>Muridae</taxon>
        <taxon>Murinae</taxon>
        <taxon>Mus</taxon>
        <taxon>Mus</taxon>
    </lineage>
</organism>
<dbReference type="EC" id="3.4.21.47" evidence="1"/>
<dbReference type="EMBL" id="M60646">
    <property type="protein sequence ID" value="AAA37379.1"/>
    <property type="molecule type" value="Genomic_DNA"/>
</dbReference>
<dbReference type="EMBL" id="M60629">
    <property type="protein sequence ID" value="AAA37379.1"/>
    <property type="status" value="JOINED"/>
    <property type="molecule type" value="Genomic_DNA"/>
</dbReference>
<dbReference type="EMBL" id="M60630">
    <property type="protein sequence ID" value="AAA37379.1"/>
    <property type="status" value="JOINED"/>
    <property type="molecule type" value="Genomic_DNA"/>
</dbReference>
<dbReference type="EMBL" id="M60631">
    <property type="protein sequence ID" value="AAA37379.1"/>
    <property type="status" value="JOINED"/>
    <property type="molecule type" value="Genomic_DNA"/>
</dbReference>
<dbReference type="EMBL" id="M60632">
    <property type="protein sequence ID" value="AAA37379.1"/>
    <property type="status" value="JOINED"/>
    <property type="molecule type" value="Genomic_DNA"/>
</dbReference>
<dbReference type="EMBL" id="M60633">
    <property type="protein sequence ID" value="AAA37379.1"/>
    <property type="status" value="JOINED"/>
    <property type="molecule type" value="Genomic_DNA"/>
</dbReference>
<dbReference type="EMBL" id="M60634">
    <property type="protein sequence ID" value="AAA37379.1"/>
    <property type="status" value="JOINED"/>
    <property type="molecule type" value="Genomic_DNA"/>
</dbReference>
<dbReference type="EMBL" id="M60635">
    <property type="protein sequence ID" value="AAA37379.1"/>
    <property type="status" value="JOINED"/>
    <property type="molecule type" value="Genomic_DNA"/>
</dbReference>
<dbReference type="EMBL" id="M60636">
    <property type="protein sequence ID" value="AAA37379.1"/>
    <property type="status" value="JOINED"/>
    <property type="molecule type" value="Genomic_DNA"/>
</dbReference>
<dbReference type="EMBL" id="M60637">
    <property type="protein sequence ID" value="AAA37379.1"/>
    <property type="status" value="JOINED"/>
    <property type="molecule type" value="Genomic_DNA"/>
</dbReference>
<dbReference type="EMBL" id="M60638">
    <property type="protein sequence ID" value="AAA37379.1"/>
    <property type="status" value="JOINED"/>
    <property type="molecule type" value="Genomic_DNA"/>
</dbReference>
<dbReference type="EMBL" id="M60639">
    <property type="protein sequence ID" value="AAA37379.1"/>
    <property type="status" value="JOINED"/>
    <property type="molecule type" value="Genomic_DNA"/>
</dbReference>
<dbReference type="EMBL" id="M60640">
    <property type="protein sequence ID" value="AAA37379.1"/>
    <property type="status" value="JOINED"/>
    <property type="molecule type" value="Genomic_DNA"/>
</dbReference>
<dbReference type="EMBL" id="M60641">
    <property type="protein sequence ID" value="AAA37379.1"/>
    <property type="status" value="JOINED"/>
    <property type="molecule type" value="Genomic_DNA"/>
</dbReference>
<dbReference type="EMBL" id="M60642">
    <property type="protein sequence ID" value="AAA37379.1"/>
    <property type="status" value="JOINED"/>
    <property type="molecule type" value="Genomic_DNA"/>
</dbReference>
<dbReference type="EMBL" id="M60643">
    <property type="protein sequence ID" value="AAA37379.1"/>
    <property type="status" value="JOINED"/>
    <property type="molecule type" value="Genomic_DNA"/>
</dbReference>
<dbReference type="EMBL" id="M60644">
    <property type="protein sequence ID" value="AAA37379.1"/>
    <property type="status" value="JOINED"/>
    <property type="molecule type" value="Genomic_DNA"/>
</dbReference>
<dbReference type="EMBL" id="M60645">
    <property type="protein sequence ID" value="AAA37379.1"/>
    <property type="status" value="JOINED"/>
    <property type="molecule type" value="Genomic_DNA"/>
</dbReference>
<dbReference type="EMBL" id="AF049850">
    <property type="protein sequence ID" value="AAC05283.1"/>
    <property type="molecule type" value="Genomic_DNA"/>
</dbReference>
<dbReference type="EMBL" id="AF109906">
    <property type="protein sequence ID" value="AAC84160.1"/>
    <property type="molecule type" value="Genomic_DNA"/>
</dbReference>
<dbReference type="EMBL" id="BC005451">
    <property type="protein sequence ID" value="AAH05451.1"/>
    <property type="molecule type" value="mRNA"/>
</dbReference>
<dbReference type="EMBL" id="K01496">
    <property type="protein sequence ID" value="AAA39549.1"/>
    <property type="molecule type" value="mRNA"/>
</dbReference>
<dbReference type="EMBL" id="K01497">
    <property type="protein sequence ID" value="AAA39550.1"/>
    <property type="molecule type" value="mRNA"/>
</dbReference>
<dbReference type="EMBL" id="K01498">
    <property type="protein sequence ID" value="AAA39551.1"/>
    <property type="molecule type" value="mRNA"/>
</dbReference>
<dbReference type="EMBL" id="M57890">
    <property type="protein sequence ID" value="AAA63293.1"/>
    <property type="molecule type" value="mRNA"/>
</dbReference>
<dbReference type="PIR" id="A38875">
    <property type="entry name" value="BBMS"/>
</dbReference>
<dbReference type="SMR" id="P04186"/>
<dbReference type="ComplexPortal" id="CPX-5893">
    <property type="entry name" value="Alternative pathway fluid-phase C3 convertase complex C3(H2O)Bb"/>
</dbReference>
<dbReference type="ComplexPortal" id="CPX-5894">
    <property type="entry name" value="Alternative pathway C3 convertase complex C3bBb"/>
</dbReference>
<dbReference type="FunCoup" id="P04186">
    <property type="interactions" value="181"/>
</dbReference>
<dbReference type="IntAct" id="P04186">
    <property type="interactions" value="2"/>
</dbReference>
<dbReference type="MINT" id="P04186"/>
<dbReference type="STRING" id="10090.ENSMUSP00000025229"/>
<dbReference type="BindingDB" id="P04186"/>
<dbReference type="ChEMBL" id="CHEMBL4630808"/>
<dbReference type="MEROPS" id="S01.196"/>
<dbReference type="GlyCosmos" id="P04186">
    <property type="glycosylation" value="4 sites, No reported glycans"/>
</dbReference>
<dbReference type="GlyGen" id="P04186">
    <property type="glycosylation" value="5 sites, 1 O-linked glycan (1 site)"/>
</dbReference>
<dbReference type="iPTMnet" id="P04186"/>
<dbReference type="PhosphoSitePlus" id="P04186"/>
<dbReference type="SwissPalm" id="P04186"/>
<dbReference type="CPTAC" id="non-CPTAC-3901"/>
<dbReference type="jPOST" id="P04186"/>
<dbReference type="PaxDb" id="10090-ENSMUSP00000025229"/>
<dbReference type="PeptideAtlas" id="P04186"/>
<dbReference type="ProteomicsDB" id="281395"/>
<dbReference type="Ensembl" id="ENSMUST00000128767.8">
    <property type="protein sequence ID" value="ENSMUSP00000119977.2"/>
    <property type="gene ID" value="ENSMUSG00000090231.11"/>
</dbReference>
<dbReference type="AGR" id="MGI:105975"/>
<dbReference type="MGI" id="MGI:105975">
    <property type="gene designation" value="Cfb"/>
</dbReference>
<dbReference type="VEuPathDB" id="HostDB:ENSMUSG00000090231"/>
<dbReference type="eggNOG" id="KOG3627">
    <property type="taxonomic scope" value="Eukaryota"/>
</dbReference>
<dbReference type="GeneTree" id="ENSGT00940000158605"/>
<dbReference type="HOGENOM" id="CLU_022004_1_0_1"/>
<dbReference type="InParanoid" id="P04186"/>
<dbReference type="OMA" id="PQKGHEN"/>
<dbReference type="PhylomeDB" id="P04186"/>
<dbReference type="BRENDA" id="3.4.21.47">
    <property type="organism ID" value="3474"/>
</dbReference>
<dbReference type="Reactome" id="R-MMU-173736">
    <property type="pathway name" value="Alternative complement activation"/>
</dbReference>
<dbReference type="Reactome" id="R-MMU-174577">
    <property type="pathway name" value="Activation of C3 and C5"/>
</dbReference>
<dbReference type="Reactome" id="R-MMU-977606">
    <property type="pathway name" value="Regulation of Complement cascade"/>
</dbReference>
<dbReference type="ChiTaRS" id="Cfb">
    <property type="organism name" value="mouse"/>
</dbReference>
<dbReference type="PRO" id="PR:P04186"/>
<dbReference type="Proteomes" id="UP000000589">
    <property type="component" value="Chromosome 17"/>
</dbReference>
<dbReference type="RNAct" id="P04186">
    <property type="molecule type" value="protein"/>
</dbReference>
<dbReference type="Bgee" id="ENSMUSG00000090231">
    <property type="expression patterns" value="Expressed in proximal tubule and 67 other cell types or tissues"/>
</dbReference>
<dbReference type="ExpressionAtlas" id="P04186">
    <property type="expression patterns" value="baseline and differential"/>
</dbReference>
<dbReference type="GO" id="GO:0005576">
    <property type="term" value="C:extracellular region"/>
    <property type="evidence" value="ECO:0007669"/>
    <property type="project" value="UniProtKB-SubCell"/>
</dbReference>
<dbReference type="GO" id="GO:0004252">
    <property type="term" value="F:serine-type endopeptidase activity"/>
    <property type="evidence" value="ECO:0007669"/>
    <property type="project" value="UniProtKB-EC"/>
</dbReference>
<dbReference type="GO" id="GO:0042100">
    <property type="term" value="P:B cell proliferation"/>
    <property type="evidence" value="ECO:0000304"/>
    <property type="project" value="MGI"/>
</dbReference>
<dbReference type="GO" id="GO:0006957">
    <property type="term" value="P:complement activation, alternative pathway"/>
    <property type="evidence" value="ECO:0000315"/>
    <property type="project" value="MGI"/>
</dbReference>
<dbReference type="GO" id="GO:0006508">
    <property type="term" value="P:proteolysis"/>
    <property type="evidence" value="ECO:0007669"/>
    <property type="project" value="UniProtKB-KW"/>
</dbReference>
<dbReference type="CDD" id="cd00033">
    <property type="entry name" value="CCP"/>
    <property type="match status" value="3"/>
</dbReference>
<dbReference type="CDD" id="cd00190">
    <property type="entry name" value="Tryp_SPc"/>
    <property type="match status" value="1"/>
</dbReference>
<dbReference type="CDD" id="cd01470">
    <property type="entry name" value="vWA_complement_factors"/>
    <property type="match status" value="1"/>
</dbReference>
<dbReference type="FunFam" id="2.10.70.10:FF:000052">
    <property type="entry name" value="Complement factor B"/>
    <property type="match status" value="1"/>
</dbReference>
<dbReference type="FunFam" id="3.40.50.410:FF:000056">
    <property type="entry name" value="Complement factor B"/>
    <property type="match status" value="1"/>
</dbReference>
<dbReference type="FunFam" id="2.10.70.10:FF:000019">
    <property type="entry name" value="Complement factor b,-like"/>
    <property type="match status" value="2"/>
</dbReference>
<dbReference type="Gene3D" id="2.40.10.120">
    <property type="match status" value="1"/>
</dbReference>
<dbReference type="Gene3D" id="2.10.70.10">
    <property type="entry name" value="Complement Module, domain 1"/>
    <property type="match status" value="3"/>
</dbReference>
<dbReference type="Gene3D" id="3.40.50.410">
    <property type="entry name" value="von Willebrand factor, type A domain"/>
    <property type="match status" value="1"/>
</dbReference>
<dbReference type="InterPro" id="IPR011360">
    <property type="entry name" value="Compl_C2_B"/>
</dbReference>
<dbReference type="InterPro" id="IPR028341">
    <property type="entry name" value="Complement_B"/>
</dbReference>
<dbReference type="InterPro" id="IPR009003">
    <property type="entry name" value="Peptidase_S1_PA"/>
</dbReference>
<dbReference type="InterPro" id="IPR001314">
    <property type="entry name" value="Peptidase_S1A"/>
</dbReference>
<dbReference type="InterPro" id="IPR035976">
    <property type="entry name" value="Sushi/SCR/CCP_sf"/>
</dbReference>
<dbReference type="InterPro" id="IPR000436">
    <property type="entry name" value="Sushi_SCR_CCP_dom"/>
</dbReference>
<dbReference type="InterPro" id="IPR001254">
    <property type="entry name" value="Trypsin_dom"/>
</dbReference>
<dbReference type="InterPro" id="IPR018114">
    <property type="entry name" value="TRYPSIN_HIS"/>
</dbReference>
<dbReference type="InterPro" id="IPR033116">
    <property type="entry name" value="TRYPSIN_SER"/>
</dbReference>
<dbReference type="InterPro" id="IPR002035">
    <property type="entry name" value="VWF_A"/>
</dbReference>
<dbReference type="InterPro" id="IPR036465">
    <property type="entry name" value="vWFA_dom_sf"/>
</dbReference>
<dbReference type="PANTHER" id="PTHR46393:SF1">
    <property type="entry name" value="COMPLEMENT FACTOR B"/>
    <property type="match status" value="1"/>
</dbReference>
<dbReference type="PANTHER" id="PTHR46393">
    <property type="entry name" value="SUSHI DOMAIN-CONTAINING PROTEIN"/>
    <property type="match status" value="1"/>
</dbReference>
<dbReference type="Pfam" id="PF00084">
    <property type="entry name" value="Sushi"/>
    <property type="match status" value="3"/>
</dbReference>
<dbReference type="Pfam" id="PF00089">
    <property type="entry name" value="Trypsin"/>
    <property type="match status" value="1"/>
</dbReference>
<dbReference type="Pfam" id="PF00092">
    <property type="entry name" value="VWA"/>
    <property type="match status" value="1"/>
</dbReference>
<dbReference type="PIRSF" id="PIRSF001154">
    <property type="entry name" value="Compl_C2_B"/>
    <property type="match status" value="1"/>
</dbReference>
<dbReference type="PIRSF" id="PIRSF500181">
    <property type="entry name" value="Complement_B"/>
    <property type="match status" value="1"/>
</dbReference>
<dbReference type="PRINTS" id="PR00722">
    <property type="entry name" value="CHYMOTRYPSIN"/>
</dbReference>
<dbReference type="PRINTS" id="PR00453">
    <property type="entry name" value="VWFADOMAIN"/>
</dbReference>
<dbReference type="SMART" id="SM00032">
    <property type="entry name" value="CCP"/>
    <property type="match status" value="3"/>
</dbReference>
<dbReference type="SMART" id="SM00020">
    <property type="entry name" value="Tryp_SPc"/>
    <property type="match status" value="1"/>
</dbReference>
<dbReference type="SMART" id="SM00327">
    <property type="entry name" value="VWA"/>
    <property type="match status" value="1"/>
</dbReference>
<dbReference type="SUPFAM" id="SSF57535">
    <property type="entry name" value="Complement control module/SCR domain"/>
    <property type="match status" value="3"/>
</dbReference>
<dbReference type="SUPFAM" id="SSF50494">
    <property type="entry name" value="Trypsin-like serine proteases"/>
    <property type="match status" value="1"/>
</dbReference>
<dbReference type="SUPFAM" id="SSF53300">
    <property type="entry name" value="vWA-like"/>
    <property type="match status" value="1"/>
</dbReference>
<dbReference type="PROSITE" id="PS50923">
    <property type="entry name" value="SUSHI"/>
    <property type="match status" value="3"/>
</dbReference>
<dbReference type="PROSITE" id="PS50240">
    <property type="entry name" value="TRYPSIN_DOM"/>
    <property type="match status" value="1"/>
</dbReference>
<dbReference type="PROSITE" id="PS00134">
    <property type="entry name" value="TRYPSIN_HIS"/>
    <property type="match status" value="1"/>
</dbReference>
<dbReference type="PROSITE" id="PS00135">
    <property type="entry name" value="TRYPSIN_SER"/>
    <property type="match status" value="1"/>
</dbReference>
<dbReference type="PROSITE" id="PS50234">
    <property type="entry name" value="VWFA"/>
    <property type="match status" value="1"/>
</dbReference>
<gene>
    <name type="primary">Cfb</name>
    <name type="synonym">Bf</name>
    <name type="synonym">H2-Bf</name>
</gene>
<sequence length="761" mass="85004">MESPQLCLVLLVLGFSSGGVSATPVLEARPQVSCSLEGVEIKGGSFQLLQGGQALEYLCPSGFYPYPVQTRTCRSTGSWSDLQTRDQKIVQKAECRAIRCPRPQDFENGEFWPRSPFYNLSDQISFQCYDGYVLRGSANRTCQENGRWDGQTAICDDGAGYCPNPGIPIGTRKVGSQYRLEDIVTYHCSRGLVLRGSQKRKCQEGGSWSGTEPSCQDSFMYDSPQEVAEAFLSSLTETIEGADAEDGHSPGEQQKRKIVLDPSGSMNIYLVLDGSDSIGSSNFTGAKRCLTNLIEKVASYGVRPRYGLLTYATVPKVLVRVSDERSSDADWVTEKLNQISYEDHKLKSGTNTKRALQAVYSMMSWAGDAPPEGWNRTRHVIIIMTDGLHNMGGNPVTVIQDIRALLDIGRDPKNPREDYLDVYVFGVGPLVDSVNINALASKKDNEHHVFKVKDMEDLENVFYQMIDETKSLSLCGMVWEHKKGNDYHKQPWQAKISVTRPLKGHETCMGAVVSEYFVLTAAHCFMVDDQKHSIKVSVGGQRRDLEIEEVLFHPKYNINGKKAEGIPEFYDYDVALVKLKNKLKYGQTLRPICLPCTEGTTRALRLPQTATCKQHKEQLLPVKDVKALFVSEQGKSLTRKEVYIKNGDKKASCERDATKAQGYEKVKDASEVVTPRFLCTGGVDPYADPNTCKGDSGGPLIVHKRSRFIQVGVISWGVVDVCRDQRRQQLVPSYARDFHINLFQVLPWLKDKLKDEDLGFL</sequence>
<keyword id="KW-0165">Cleavage on pair of basic residues</keyword>
<keyword id="KW-0179">Complement alternate pathway</keyword>
<keyword id="KW-1015">Disulfide bond</keyword>
<keyword id="KW-0325">Glycoprotein</keyword>
<keyword id="KW-0378">Hydrolase</keyword>
<keyword id="KW-0391">Immunity</keyword>
<keyword id="KW-0399">Innate immunity</keyword>
<keyword id="KW-0460">Magnesium</keyword>
<keyword id="KW-0479">Metal-binding</keyword>
<keyword id="KW-0645">Protease</keyword>
<keyword id="KW-1185">Reference proteome</keyword>
<keyword id="KW-0677">Repeat</keyword>
<keyword id="KW-0964">Secreted</keyword>
<keyword id="KW-0720">Serine protease</keyword>
<keyword id="KW-0732">Signal</keyword>
<keyword id="KW-0768">Sushi</keyword>
<keyword id="KW-0865">Zymogen</keyword>
<name>CFAB_MOUSE</name>
<accession>P04186</accession>
<feature type="signal peptide" evidence="1">
    <location>
        <begin position="1"/>
        <end position="22"/>
    </location>
</feature>
<feature type="chain" id="PRO_0000027548" description="Complement factor B">
    <location>
        <begin position="23"/>
        <end position="761"/>
    </location>
</feature>
<feature type="chain" id="PRO_0000027549" description="Complement factor B Ba">
    <location>
        <begin position="23"/>
        <end position="256"/>
    </location>
</feature>
<feature type="chain" id="PRO_0000027550" description="Complement factor B Bb">
    <location>
        <begin position="257"/>
        <end position="761"/>
    </location>
</feature>
<feature type="domain" description="Sushi 1" evidence="5">
    <location>
        <begin position="32"/>
        <end position="97"/>
    </location>
</feature>
<feature type="domain" description="Sushi 2" evidence="5">
    <location>
        <begin position="98"/>
        <end position="157"/>
    </location>
</feature>
<feature type="domain" description="Sushi 3" evidence="5">
    <location>
        <begin position="160"/>
        <end position="217"/>
    </location>
</feature>
<feature type="domain" description="VWFA" evidence="3">
    <location>
        <begin position="267"/>
        <end position="466"/>
    </location>
</feature>
<feature type="domain" description="Peptidase S1" evidence="4">
    <location>
        <begin position="474"/>
        <end position="754"/>
    </location>
</feature>
<feature type="active site" description="Charge relay system" evidence="4">
    <location>
        <position position="523"/>
    </location>
</feature>
<feature type="active site" description="Charge relay system" evidence="4">
    <location>
        <position position="573"/>
    </location>
</feature>
<feature type="active site" description="Charge relay system" evidence="4">
    <location>
        <position position="696"/>
    </location>
</feature>
<feature type="binding site" evidence="1">
    <location>
        <position position="275"/>
    </location>
    <ligand>
        <name>Mg(2+)</name>
        <dbReference type="ChEBI" id="CHEBI:18420"/>
    </ligand>
</feature>
<feature type="binding site" evidence="1">
    <location>
        <position position="277"/>
    </location>
    <ligand>
        <name>Mg(2+)</name>
        <dbReference type="ChEBI" id="CHEBI:18420"/>
    </ligand>
</feature>
<feature type="binding site" evidence="1">
    <location>
        <position position="350"/>
    </location>
    <ligand>
        <name>Mg(2+)</name>
        <dbReference type="ChEBI" id="CHEBI:18420"/>
    </ligand>
</feature>
<feature type="site" description="Cleavage; by CFD" evidence="1">
    <location>
        <begin position="256"/>
        <end position="257"/>
    </location>
</feature>
<feature type="glycosylation site" description="N-linked (GlcNAc...) asparagine" evidence="7">
    <location>
        <position position="119"/>
    </location>
</feature>
<feature type="glycosylation site" description="N-linked (GlcNAc...) asparagine" evidence="2">
    <location>
        <position position="139"/>
    </location>
</feature>
<feature type="glycosylation site" description="N-linked (GlcNAc...) asparagine" evidence="6">
    <location>
        <position position="282"/>
    </location>
</feature>
<feature type="glycosylation site" description="N-linked (GlcNAc...) asparagine" evidence="2">
    <location>
        <position position="375"/>
    </location>
</feature>
<feature type="disulfide bond" evidence="4">
    <location>
        <begin position="34"/>
        <end position="73"/>
    </location>
</feature>
<feature type="disulfide bond" evidence="4">
    <location>
        <begin position="59"/>
        <end position="95"/>
    </location>
</feature>
<feature type="disulfide bond" evidence="4">
    <location>
        <begin position="100"/>
        <end position="142"/>
    </location>
</feature>
<feature type="disulfide bond" evidence="4">
    <location>
        <begin position="128"/>
        <end position="155"/>
    </location>
</feature>
<feature type="disulfide bond" evidence="4">
    <location>
        <begin position="162"/>
        <end position="202"/>
    </location>
</feature>
<feature type="disulfide bond" evidence="4">
    <location>
        <begin position="188"/>
        <end position="215"/>
    </location>
</feature>
<feature type="disulfide bond" evidence="1">
    <location>
        <begin position="475"/>
        <end position="593"/>
    </location>
</feature>
<feature type="disulfide bond" evidence="4">
    <location>
        <begin position="508"/>
        <end position="524"/>
    </location>
</feature>
<feature type="disulfide bond" evidence="1">
    <location>
        <begin position="596"/>
        <end position="612"/>
    </location>
</feature>
<feature type="disulfide bond" evidence="1">
    <location>
        <begin position="653"/>
        <end position="679"/>
    </location>
</feature>
<feature type="disulfide bond" evidence="4">
    <location>
        <begin position="692"/>
        <end position="722"/>
    </location>
</feature>
<feature type="sequence conflict" description="In Ref. 4; AAA39549." evidence="8" ref="4">
    <original>L</original>
    <variation>P</variation>
    <location>
        <position position="730"/>
    </location>
</feature>
<feature type="sequence conflict" description="In Ref. 4; AAA39549." evidence="8" ref="4">
    <original>V</original>
    <variation>E</variation>
    <location>
        <position position="745"/>
    </location>
</feature>
<proteinExistence type="evidence at protein level"/>